<evidence type="ECO:0000250" key="1">
    <source>
        <dbReference type="UniProtKB" id="P11161"/>
    </source>
</evidence>
<evidence type="ECO:0000255" key="2">
    <source>
        <dbReference type="PROSITE-ProRule" id="PRU00042"/>
    </source>
</evidence>
<evidence type="ECO:0000256" key="3">
    <source>
        <dbReference type="SAM" id="MobiDB-lite"/>
    </source>
</evidence>
<evidence type="ECO:0000269" key="4">
    <source>
    </source>
</evidence>
<evidence type="ECO:0000269" key="5">
    <source>
    </source>
</evidence>
<evidence type="ECO:0000269" key="6">
    <source>
    </source>
</evidence>
<evidence type="ECO:0000269" key="7">
    <source>
    </source>
</evidence>
<evidence type="ECO:0000269" key="8">
    <source>
    </source>
</evidence>
<evidence type="ECO:0000269" key="9">
    <source>
    </source>
</evidence>
<evidence type="ECO:0000269" key="10">
    <source>
    </source>
</evidence>
<evidence type="ECO:0000269" key="11">
    <source>
    </source>
</evidence>
<evidence type="ECO:0000269" key="12">
    <source>
    </source>
</evidence>
<evidence type="ECO:0000269" key="13">
    <source>
    </source>
</evidence>
<evidence type="ECO:0000269" key="14">
    <source>
    </source>
</evidence>
<evidence type="ECO:0000269" key="15">
    <source>
    </source>
</evidence>
<evidence type="ECO:0000269" key="16">
    <source>
    </source>
</evidence>
<evidence type="ECO:0000303" key="17">
    <source>
    </source>
</evidence>
<evidence type="ECO:0000305" key="18"/>
<protein>
    <recommendedName>
        <fullName>E3 SUMO-protein ligase EGR2</fullName>
        <ecNumber evidence="1">2.3.2.-</ecNumber>
    </recommendedName>
    <alternativeName>
        <fullName evidence="18">E3 SUMO-protein transferase ERG2</fullName>
    </alternativeName>
    <alternativeName>
        <fullName>Early growth response protein 2</fullName>
        <shortName>EGR-2</shortName>
    </alternativeName>
    <alternativeName>
        <fullName>Zinc finger protein Krox-20</fullName>
    </alternativeName>
</protein>
<proteinExistence type="evidence at protein level"/>
<comment type="function">
    <text evidence="4 5 6 7 8 9 11 14 15 16">Sequence-specific DNA-binding transcription factor (PubMed:11823429, PubMed:1674431, PubMed:1969796, PubMed:31852952). Plays a role in hindbrain segmentation by regulating the expression of a subset of homeobox containing genes and in Schwann cell myelination by regulating the expression of genes involved in the formation and maintenance of myelin (PubMed:11823429, PubMed:1674431, PubMed:1969796, PubMed:31852952, PubMed:8093858). Binds to two EGR2-consensus sites EGR2A (5'-CTGTAGGAG-3') and EGR2B (5'-ATGTAGGTG-3') in the HOXB3 enhancer and promotes HOXB3 transcriptional activation (PubMed:11823429). Binds to specific DNA sites located in the promoter region of HOXA4, HOXB2 and ERBB2 (PubMed:17938205, PubMed:1969796, PubMed:8093858). Regulates hindbrain segmentation by controlling the expression of Hox genes, such as HOXA4, HOXB3 and HOXB2, and thereby specifying odd and even rhombomeres (PubMed:11823429, PubMed:1674431). Promotes the expression of HOXB3 in the rhombomere r5 and of HOXB3 in r3 and r5 in the hindbrain (PubMed:11823429, PubMed:8093858). Regulates myelination in the peripheral nervous system after birth, possibly by regulating the expression of myelin proteins, such as MPZ, and by promoting the differentiation of Schwann cells (PubMed:10068633, PubMed:7935840). Involved in the development of the jaw openener musculature, probably by playing a role in its innervation through trigeminal motor neurons (PubMed:11509834). May play a role in adipogenesis, possibly by regulating the expression of CEBPB (PubMed:16054051).</text>
</comment>
<comment type="function">
    <text evidence="1">E3 SUMO-protein ligase helping SUMO1 conjugation to its coregulators NAB1 and NAB2, whose sumoylation down-regulates EGR2 transcriptional activity.</text>
</comment>
<comment type="pathway">
    <text>Protein modification; protein sumoylation.</text>
</comment>
<comment type="subunit">
    <text evidence="1 9 10">Interacts with HCFC1 (By similarity). Interacts with WWP2 (PubMed:19651900). Interacts with UBC9 (By similarity). Interacts with CITED1 (PubMed:17938205). Interacts (via phosphorylated form) with SFN (PubMed:17938205).</text>
</comment>
<comment type="interaction">
    <interactant intactId="EBI-7070449">
        <id>P08152</id>
    </interactant>
    <interactant intactId="EBI-8064899">
        <id>Q8C5D8-1</id>
        <label>Pias2</label>
    </interactant>
    <organismsDiffer>false</organismsDiffer>
    <experiments>5</experiments>
</comment>
<comment type="interaction">
    <interactant intactId="EBI-7070449">
        <id>P08152</id>
    </interactant>
    <interactant intactId="EBI-80180">
        <id>P63280</id>
        <label>Ube2i</label>
    </interactant>
    <organismsDiffer>false</organismsDiffer>
    <experiments>2</experiments>
</comment>
<comment type="subcellular location">
    <subcellularLocation>
        <location evidence="9">Nucleus</location>
    </subcellularLocation>
</comment>
<comment type="alternative products">
    <event type="alternative splicing"/>
    <isoform>
        <id>P08152-1</id>
        <name>Long</name>
        <sequence type="displayed"/>
    </isoform>
    <isoform>
        <id>P08152-2</id>
        <name>Short</name>
        <sequence type="described" ref="VSP_006864"/>
    </isoform>
</comment>
<comment type="tissue specificity">
    <text evidence="9">Expressed mainly in the thymus.</text>
</comment>
<comment type="developmental stage">
    <text evidence="9 15 16">Before 8 dpc, expressed in the future rhombomere r3 at 0-3 somites, followed by expression in rhombomere r5 in 4-7 somites at 8 dpc, and maintained until 12 somites (PubMed:8093858). Expressed in migrating neural crest cells from r5/r6 (PubMed:8093858). Expressed in boundary cap cells that surround nerve exit points from the central nervous system at 10.5 dpc (PubMed:7935840, PubMed:8093858). Up to 14.5 dpc, expressed in motor and sensory roots of cranial and spinal nerves (PubMed:7935840). After 15.5 dpc, expressed in the entire peripheral nervous system (PubMed:7935840). Expressed in the embryonic nervous system (PubMed:17938205). Expressed in myelinating Schwann cells 2 weeks after birth (PubMed:7935840).</text>
</comment>
<comment type="induction">
    <text evidence="13">Activated during G0/G1 transition in cultured cells.</text>
</comment>
<comment type="PTM">
    <text evidence="10">Ubiquitinated by WWP2 leading to proteasomal degradation.</text>
</comment>
<comment type="PTM">
    <text evidence="12">Acetylated at Lys-247. May be deacetylated by HDAC6, HDAC10 or SIRT1.</text>
</comment>
<comment type="disruption phenotype">
    <text evidence="4 5 6 15">Failure to promote expression of the Hoxb3 reporter in rhombomere r5 in the hindbrain (PubMed:11823429). Changed morphology of the sciatic nerves, with a higher density of Schwann cells, and a reduction in major components of compacted myelin, including lipidic components, as well as myelin proteins Mpz and Mbp (PubMed:7935840). Schwann cells in the sciatic nerves exhibit increased expression of Scip, reduced expression of Mpz, elevated mitotic activity and increased apoptosis at postnatal day P12 (PubMed:10068633). Total absence of myelin along the axons of sciatic nerves at postnatal day P15 (PubMed:7935840). Does not seem to affect the myelination in the central nervous system (PubMed:7935840). Signs of atrophy in the jaw openener anterior digastric (AD) and mylohoid (MY) muscles at 15 dpc with smaller diameter fibers, fibers with triangular shape, increased amount of connective tissue surrounding the fibers, suggesting a lack of neural innervation (PubMed:11509834). Reduced volume of the delineated trigeminal motor nucleus and restructuring of the brainstem at 15 dpc (PubMed:11509834). Reduced volume in both AD and MY musculature and reduced milk indigestion after birth (PubMed:11509834).</text>
</comment>
<comment type="similarity">
    <text evidence="18">Belongs to the EGR C2H2-type zinc-finger protein family.</text>
</comment>
<organism>
    <name type="scientific">Mus musculus</name>
    <name type="common">Mouse</name>
    <dbReference type="NCBI Taxonomy" id="10090"/>
    <lineage>
        <taxon>Eukaryota</taxon>
        <taxon>Metazoa</taxon>
        <taxon>Chordata</taxon>
        <taxon>Craniata</taxon>
        <taxon>Vertebrata</taxon>
        <taxon>Euteleostomi</taxon>
        <taxon>Mammalia</taxon>
        <taxon>Eutheria</taxon>
        <taxon>Euarchontoglires</taxon>
        <taxon>Glires</taxon>
        <taxon>Rodentia</taxon>
        <taxon>Myomorpha</taxon>
        <taxon>Muroidea</taxon>
        <taxon>Muridae</taxon>
        <taxon>Murinae</taxon>
        <taxon>Mus</taxon>
        <taxon>Mus</taxon>
    </lineage>
</organism>
<reference key="1">
    <citation type="journal article" date="1989" name="Mol. Cell. Biol.">
        <title>Structure, chromosome location, and expression of the mouse zinc finger gene Krox-20: multiple gene products and coregulation with the proto-oncogene c-fos.</title>
        <authorList>
            <person name="Chavrier P."/>
            <person name="Janssen-Timmen U."/>
            <person name="Mattei M.-G."/>
            <person name="Zerial M."/>
            <person name="Bravo R."/>
            <person name="Charnay P."/>
        </authorList>
    </citation>
    <scope>NUCLEOTIDE SEQUENCE [GENOMIC DNA] (ISOFORMS LONG AND SHORT)</scope>
</reference>
<reference key="2">
    <citation type="journal article" date="1988" name="EMBO J.">
        <title>A gene encoding a protein with zinc fingers is activated during G0/G1 transition in cultured cells.</title>
        <authorList>
            <person name="Chavrier P."/>
            <person name="Zerial M."/>
            <person name="Lemaire P."/>
            <person name="Almendral J."/>
            <person name="Bravo R."/>
            <person name="Charnay P."/>
        </authorList>
    </citation>
    <scope>NUCLEOTIDE SEQUENCE [MRNA] (ISOFORM SHORT)</scope>
    <scope>INDUCTION</scope>
</reference>
<reference key="3">
    <citation type="journal article" date="2004" name="Genome Res.">
        <title>The status, quality, and expansion of the NIH full-length cDNA project: the Mammalian Gene Collection (MGC).</title>
        <authorList>
            <consortium name="The MGC Project Team"/>
        </authorList>
    </citation>
    <scope>NUCLEOTIDE SEQUENCE [LARGE SCALE MRNA] (ISOFORM LONG)</scope>
    <source>
        <strain>FVB/N</strain>
        <tissue>Mammary gland</tissue>
    </source>
</reference>
<reference key="4">
    <citation type="journal article" date="1988" name="Mol. Cell. Biol.">
        <title>Characterization of a mouse multigene family that encodes zinc finger structures.</title>
        <authorList>
            <person name="Chavrier P."/>
            <person name="Lemaire P."/>
            <person name="Revelant O."/>
            <person name="Bravo R."/>
            <person name="Charnay P."/>
        </authorList>
    </citation>
    <scope>NUCLEOTIDE SEQUENCE [GENOMIC DNA] OF 339-417</scope>
</reference>
<reference key="5">
    <citation type="journal article" date="1990" name="EMBO J.">
        <title>The segment-specific gene Krox-20 encodes a transcription factor with binding sites in the promoter region of the Hox-1.4 gene.</title>
        <authorList>
            <person name="Chavrier P."/>
            <person name="Vesque C."/>
            <person name="Galliot B."/>
            <person name="Vigneron M."/>
            <person name="Dolle P."/>
            <person name="Duboule D."/>
            <person name="Charnay P."/>
        </authorList>
    </citation>
    <scope>FUNCTION</scope>
</reference>
<reference key="6">
    <citation type="journal article" date="1991" name="Biochimie">
        <title>Krox-20: a candidate gene for the regulation of pattern formation in the hindbrain.</title>
        <authorList>
            <person name="Gilardi P."/>
            <person name="Schneider-Maunoury S."/>
            <person name="Charnay P."/>
        </authorList>
    </citation>
    <scope>FUNCTION</scope>
</reference>
<reference key="7">
    <citation type="journal article" date="1992" name="Nucleic Acids Res.">
        <title>Mapping functional regions of the segment-specific transcription factor Krox-20.</title>
        <authorList>
            <person name="Vesque C."/>
            <person name="Charnay P."/>
        </authorList>
    </citation>
    <scope>DOMAINS</scope>
</reference>
<reference key="8">
    <citation type="journal article" date="1993" name="Cell">
        <title>The zinc finger gene Krox20 regulates HoxB2 (Hox2.8) during hindbrain segmentation.</title>
        <authorList>
            <person name="Sham M.H."/>
            <person name="Vesque C."/>
            <person name="Nonchev S."/>
            <person name="Marshall H."/>
            <person name="Frain M."/>
            <person name="Gupta R.D."/>
            <person name="Whiting J."/>
            <person name="Wilkinson D."/>
            <person name="Charnay P."/>
            <person name="Krumlauf R."/>
        </authorList>
    </citation>
    <scope>FUNCTION</scope>
    <scope>DEVELOPMENTAL STAGE</scope>
</reference>
<reference key="9">
    <citation type="journal article" date="1994" name="Nature">
        <title>Krox-20 controls myelination in the peripheral nervous system.</title>
        <authorList>
            <person name="Topilko P."/>
            <person name="Schneider-Maunoury S."/>
            <person name="Levi G."/>
            <person name="Baron-Van Evercooren A."/>
            <person name="Chennoufi A.B."/>
            <person name="Seitanidou T."/>
            <person name="Babinet C."/>
            <person name="Charnay P."/>
        </authorList>
    </citation>
    <scope>FUNCTION</scope>
    <scope>DEVELOPMENTAL STAGE</scope>
    <scope>DISRUPTION PHENOTYPE</scope>
</reference>
<reference key="10">
    <citation type="journal article" date="1999" name="Development">
        <title>Krox-20 controls SCIP expression, cell cycle exit and susceptibility to apoptosis in developing myelinating Schwann cells.</title>
        <authorList>
            <person name="Zorick T.S."/>
            <person name="Syroid D.E."/>
            <person name="Brown A."/>
            <person name="Gridley T."/>
            <person name="Lemke G."/>
        </authorList>
    </citation>
    <scope>FUNCTION</scope>
    <scope>DISRUPTION PHENOTYPE</scope>
</reference>
<reference key="11">
    <citation type="journal article" date="2001" name="Dev. Neurosci.">
        <title>The Krox-20 null mutation differentially affects the development of masticatory muscles.</title>
        <authorList>
            <person name="Turman J.E. Jr."/>
            <person name="Chopiuk N.B."/>
            <person name="Shuler C.F."/>
        </authorList>
    </citation>
    <scope>FUNCTION</scope>
    <scope>DISRUPTION PHENOTYPE</scope>
</reference>
<reference key="12">
    <citation type="journal article" date="2002" name="EMBO J.">
        <title>Krox20 and kreisler co-operate in the transcriptional control of segmental expression of Hoxb3 in the developing hindbrain.</title>
        <authorList>
            <person name="Manzanares M."/>
            <person name="Nardelli J."/>
            <person name="Gilardi-Hebenstreit P."/>
            <person name="Marshall H."/>
            <person name="Giudicelli F."/>
            <person name="Martinez-Pastor M.T."/>
            <person name="Krumlauf R."/>
            <person name="Charnay P."/>
        </authorList>
    </citation>
    <scope>FUNCTION</scope>
    <scope>DISRUPTION PHENOTYPE</scope>
</reference>
<reference key="13">
    <citation type="journal article" date="2005" name="Cell Metab.">
        <title>Krox20 stimulates adipogenesis via C/EBPbeta-dependent and -independent mechanisms.</title>
        <authorList>
            <person name="Chen Z."/>
            <person name="Torrens J.I."/>
            <person name="Anand A."/>
            <person name="Spiegelman B.M."/>
            <person name="Friedman J.M."/>
        </authorList>
    </citation>
    <scope>FUNCTION</scope>
</reference>
<reference key="14">
    <citation type="journal article" date="2007" name="Mol. Cell. Biol.">
        <title>An EGR2/CITED1 transcription factor complex and the 14-3-3sigma tumor suppressor are involved in regulating ErbB2 expression in a transgenic-mouse model of human breast cancer.</title>
        <authorList>
            <person name="Dillon R.L."/>
            <person name="Brown S.T."/>
            <person name="Ling C."/>
            <person name="Shioda T."/>
            <person name="Muller W.J."/>
        </authorList>
    </citation>
    <scope>FUNCTION</scope>
    <scope>INTERACTION WITH CITED1 AND SFN</scope>
    <scope>MUTAGENESIS OF SER-377</scope>
    <scope>DNA-BINDING</scope>
    <scope>SUBCELLULAR LOCATION</scope>
    <scope>TISSUE SPECIFICITY</scope>
    <scope>DEVELOPMENTAL STAGE</scope>
</reference>
<reference key="15">
    <citation type="journal article" date="2009" name="Mol. Cell. Biol.">
        <title>The HECT-type E3 ubiquitin ligase AIP2 inhibits activation-induced T-cell death by catalyzing EGR2 ubiquitination.</title>
        <authorList>
            <person name="Chen A."/>
            <person name="Gao B."/>
            <person name="Zhang J."/>
            <person name="McEwen T."/>
            <person name="Ye S.Q."/>
            <person name="Zhang D."/>
            <person name="Fang D."/>
        </authorList>
    </citation>
    <scope>UBIQUITINATION</scope>
    <scope>INTERACTION WITH WWP2</scope>
    <scope>MUTAGENESIS OF TYR-174 AND TYR-208</scope>
</reference>
<reference key="16">
    <citation type="journal article" date="2017" name="Biochem. Biophys. Res. Commun.">
        <title>Identification of zinc finger transcription factor EGR2 as a novel acetylated protein.</title>
        <authorList>
            <person name="Noritsugu K."/>
            <person name="Ito A."/>
            <person name="Nakao Y."/>
            <person name="Yoshida M."/>
        </authorList>
    </citation>
    <scope>ACETYLATION AT LYS-247</scope>
    <scope>MUTAGENESIS OF LYS-247</scope>
</reference>
<reference key="17">
    <citation type="journal article" date="2019" name="Sci. Rep.">
        <title>A de novo EGR2 variant, c.1232A &gt; G p.Asp411Gly, causes severe early-onset Charcot-Marie-Tooth Neuropathy Type 3 (Dejerine-Sottas Neuropathy).</title>
        <authorList>
            <person name="Grosz B.R."/>
            <person name="Golovchenko N.B."/>
            <person name="Ellis M."/>
            <person name="Kumar K."/>
            <person name="Nicholson G.A."/>
            <person name="Antonellis A."/>
            <person name="Kennerson M.L."/>
        </authorList>
    </citation>
    <scope>FUNCTION</scope>
    <scope>MUTAGENESIS OF ASP-408</scope>
</reference>
<accession>P08152</accession>
<dbReference type="EC" id="2.3.2.-" evidence="1"/>
<dbReference type="EMBL" id="M24377">
    <property type="protein sequence ID" value="AAA39379.1"/>
    <property type="molecule type" value="Genomic_DNA"/>
</dbReference>
<dbReference type="EMBL" id="M24376">
    <property type="protein sequence ID" value="AAA39379.1"/>
    <property type="status" value="JOINED"/>
    <property type="molecule type" value="Genomic_DNA"/>
</dbReference>
<dbReference type="EMBL" id="M24377">
    <property type="protein sequence ID" value="AAA39380.1"/>
    <property type="molecule type" value="Genomic_DNA"/>
</dbReference>
<dbReference type="EMBL" id="M24376">
    <property type="protein sequence ID" value="AAA39380.1"/>
    <property type="status" value="JOINED"/>
    <property type="molecule type" value="Genomic_DNA"/>
</dbReference>
<dbReference type="EMBL" id="X06746">
    <property type="protein sequence ID" value="CAA29921.1"/>
    <property type="molecule type" value="mRNA"/>
</dbReference>
<dbReference type="EMBL" id="BC009093">
    <property type="protein sequence ID" value="AAH09093.1"/>
    <property type="molecule type" value="mRNA"/>
</dbReference>
<dbReference type="EMBL" id="M20759">
    <property type="protein sequence ID" value="AAA39381.1"/>
    <property type="molecule type" value="Genomic_DNA"/>
</dbReference>
<dbReference type="CCDS" id="CCDS35927.2">
    <molecule id="P08152-1"/>
</dbReference>
<dbReference type="CCDS" id="CCDS83706.1">
    <molecule id="P08152-2"/>
</dbReference>
<dbReference type="PIR" id="A30136">
    <property type="entry name" value="A30136"/>
</dbReference>
<dbReference type="PIR" id="S00256">
    <property type="entry name" value="S00256"/>
</dbReference>
<dbReference type="RefSeq" id="NP_001334387.1">
    <molecule id="P08152-2"/>
    <property type="nucleotide sequence ID" value="NM_001347458.1"/>
</dbReference>
<dbReference type="RefSeq" id="NP_001360914.1">
    <molecule id="P08152-2"/>
    <property type="nucleotide sequence ID" value="NM_001373985.1"/>
</dbReference>
<dbReference type="RefSeq" id="NP_001360915.1">
    <molecule id="P08152-2"/>
    <property type="nucleotide sequence ID" value="NM_001373986.1"/>
</dbReference>
<dbReference type="RefSeq" id="NP_001360916.1">
    <molecule id="P08152-2"/>
    <property type="nucleotide sequence ID" value="NM_001373987.1"/>
</dbReference>
<dbReference type="RefSeq" id="NP_034248.2">
    <molecule id="P08152-1"/>
    <property type="nucleotide sequence ID" value="NM_010118.3"/>
</dbReference>
<dbReference type="RefSeq" id="XP_006513272.1">
    <property type="nucleotide sequence ID" value="XM_006513209.2"/>
</dbReference>
<dbReference type="RefSeq" id="XP_006513273.1">
    <property type="nucleotide sequence ID" value="XM_006513210.2"/>
</dbReference>
<dbReference type="RefSeq" id="XP_006513274.1">
    <property type="nucleotide sequence ID" value="XM_006513211.2"/>
</dbReference>
<dbReference type="RefSeq" id="XP_006513276.1">
    <property type="nucleotide sequence ID" value="XM_006513213.3"/>
</dbReference>
<dbReference type="RefSeq" id="XP_011241670.1">
    <property type="nucleotide sequence ID" value="XM_011243368.2"/>
</dbReference>
<dbReference type="SMR" id="P08152"/>
<dbReference type="BioGRID" id="199405">
    <property type="interactions" value="7"/>
</dbReference>
<dbReference type="ELM" id="P08152"/>
<dbReference type="FunCoup" id="P08152">
    <property type="interactions" value="1893"/>
</dbReference>
<dbReference type="IntAct" id="P08152">
    <property type="interactions" value="5"/>
</dbReference>
<dbReference type="MINT" id="P08152"/>
<dbReference type="STRING" id="10090.ENSMUSP00000041053"/>
<dbReference type="iPTMnet" id="P08152"/>
<dbReference type="PhosphoSitePlus" id="P08152"/>
<dbReference type="PaxDb" id="10090-ENSMUSP00000041053"/>
<dbReference type="ProteomicsDB" id="277805">
    <molecule id="P08152-1"/>
</dbReference>
<dbReference type="ProteomicsDB" id="277806">
    <molecule id="P08152-2"/>
</dbReference>
<dbReference type="Antibodypedia" id="14464">
    <property type="antibodies" value="538 antibodies from 42 providers"/>
</dbReference>
<dbReference type="DNASU" id="13654"/>
<dbReference type="Ensembl" id="ENSMUST00000048289.14">
    <molecule id="P08152-1"/>
    <property type="protein sequence ID" value="ENSMUSP00000041053.8"/>
    <property type="gene ID" value="ENSMUSG00000037868.16"/>
</dbReference>
<dbReference type="Ensembl" id="ENSMUST00000105438.9">
    <molecule id="P08152-2"/>
    <property type="protein sequence ID" value="ENSMUSP00000101078.3"/>
    <property type="gene ID" value="ENSMUSG00000037868.16"/>
</dbReference>
<dbReference type="GeneID" id="13654"/>
<dbReference type="KEGG" id="mmu:13654"/>
<dbReference type="UCSC" id="uc007flx.1">
    <molecule id="P08152-1"/>
    <property type="organism name" value="mouse"/>
</dbReference>
<dbReference type="AGR" id="MGI:95296"/>
<dbReference type="CTD" id="1959"/>
<dbReference type="MGI" id="MGI:95296">
    <property type="gene designation" value="Egr2"/>
</dbReference>
<dbReference type="VEuPathDB" id="HostDB:ENSMUSG00000037868"/>
<dbReference type="eggNOG" id="KOG1721">
    <property type="taxonomic scope" value="Eukaryota"/>
</dbReference>
<dbReference type="GeneTree" id="ENSGT00940000158394"/>
<dbReference type="InParanoid" id="P08152"/>
<dbReference type="OMA" id="QCQRELH"/>
<dbReference type="OrthoDB" id="8197458at2759"/>
<dbReference type="PhylomeDB" id="P08152"/>
<dbReference type="TreeFam" id="TF318980"/>
<dbReference type="Reactome" id="R-MMU-9031628">
    <property type="pathway name" value="NGF-stimulated transcription"/>
</dbReference>
<dbReference type="UniPathway" id="UPA00886"/>
<dbReference type="BioGRID-ORCS" id="13654">
    <property type="hits" value="0 hits in 76 CRISPR screens"/>
</dbReference>
<dbReference type="ChiTaRS" id="Egr2">
    <property type="organism name" value="mouse"/>
</dbReference>
<dbReference type="PRO" id="PR:P08152"/>
<dbReference type="Proteomes" id="UP000000589">
    <property type="component" value="Chromosome 10"/>
</dbReference>
<dbReference type="RNAct" id="P08152">
    <property type="molecule type" value="protein"/>
</dbReference>
<dbReference type="Bgee" id="ENSMUSG00000037868">
    <property type="expression patterns" value="Expressed in neurectoderm and 85 other cell types or tissues"/>
</dbReference>
<dbReference type="ExpressionAtlas" id="P08152">
    <property type="expression patterns" value="baseline and differential"/>
</dbReference>
<dbReference type="GO" id="GO:0005737">
    <property type="term" value="C:cytoplasm"/>
    <property type="evidence" value="ECO:0000314"/>
    <property type="project" value="UniProtKB"/>
</dbReference>
<dbReference type="GO" id="GO:0005654">
    <property type="term" value="C:nucleoplasm"/>
    <property type="evidence" value="ECO:0000304"/>
    <property type="project" value="Reactome"/>
</dbReference>
<dbReference type="GO" id="GO:0005634">
    <property type="term" value="C:nucleus"/>
    <property type="evidence" value="ECO:0000314"/>
    <property type="project" value="MGI"/>
</dbReference>
<dbReference type="GO" id="GO:0003682">
    <property type="term" value="F:chromatin binding"/>
    <property type="evidence" value="ECO:0000314"/>
    <property type="project" value="UniProtKB"/>
</dbReference>
<dbReference type="GO" id="GO:0003677">
    <property type="term" value="F:DNA binding"/>
    <property type="evidence" value="ECO:0000314"/>
    <property type="project" value="MGI"/>
</dbReference>
<dbReference type="GO" id="GO:0001228">
    <property type="term" value="F:DNA-binding transcription activator activity, RNA polymerase II-specific"/>
    <property type="evidence" value="ECO:0007669"/>
    <property type="project" value="Ensembl"/>
</dbReference>
<dbReference type="GO" id="GO:0003700">
    <property type="term" value="F:DNA-binding transcription factor activity"/>
    <property type="evidence" value="ECO:0000314"/>
    <property type="project" value="UniProtKB"/>
</dbReference>
<dbReference type="GO" id="GO:0000981">
    <property type="term" value="F:DNA-binding transcription factor activity, RNA polymerase II-specific"/>
    <property type="evidence" value="ECO:0000314"/>
    <property type="project" value="UniProtKB"/>
</dbReference>
<dbReference type="GO" id="GO:0000978">
    <property type="term" value="F:RNA polymerase II cis-regulatory region sequence-specific DNA binding"/>
    <property type="evidence" value="ECO:0000314"/>
    <property type="project" value="MGI"/>
</dbReference>
<dbReference type="GO" id="GO:0061629">
    <property type="term" value="F:RNA polymerase II-specific DNA-binding transcription factor binding"/>
    <property type="evidence" value="ECO:0000353"/>
    <property type="project" value="BHF-UCL"/>
</dbReference>
<dbReference type="GO" id="GO:0043565">
    <property type="term" value="F:sequence-specific DNA binding"/>
    <property type="evidence" value="ECO:0000314"/>
    <property type="project" value="UniProtKB"/>
</dbReference>
<dbReference type="GO" id="GO:0061665">
    <property type="term" value="F:SUMO ligase activity"/>
    <property type="evidence" value="ECO:0000314"/>
    <property type="project" value="ARUK-UCL"/>
</dbReference>
<dbReference type="GO" id="GO:0000976">
    <property type="term" value="F:transcription cis-regulatory region binding"/>
    <property type="evidence" value="ECO:0000314"/>
    <property type="project" value="UniProtKB"/>
</dbReference>
<dbReference type="GO" id="GO:0031625">
    <property type="term" value="F:ubiquitin protein ligase binding"/>
    <property type="evidence" value="ECO:0007669"/>
    <property type="project" value="Ensembl"/>
</dbReference>
<dbReference type="GO" id="GO:0008270">
    <property type="term" value="F:zinc ion binding"/>
    <property type="evidence" value="ECO:0007669"/>
    <property type="project" value="UniProtKB-KW"/>
</dbReference>
<dbReference type="GO" id="GO:0035904">
    <property type="term" value="P:aorta development"/>
    <property type="evidence" value="ECO:0000315"/>
    <property type="project" value="MGI"/>
</dbReference>
<dbReference type="GO" id="GO:0035284">
    <property type="term" value="P:brain segmentation"/>
    <property type="evidence" value="ECO:0000315"/>
    <property type="project" value="MGI"/>
</dbReference>
<dbReference type="GO" id="GO:0021612">
    <property type="term" value="P:facial nerve structural organization"/>
    <property type="evidence" value="ECO:0000315"/>
    <property type="project" value="UniProtKB"/>
</dbReference>
<dbReference type="GO" id="GO:0045444">
    <property type="term" value="P:fat cell differentiation"/>
    <property type="evidence" value="ECO:0000315"/>
    <property type="project" value="UniProtKB"/>
</dbReference>
<dbReference type="GO" id="GO:0010467">
    <property type="term" value="P:gene expression"/>
    <property type="evidence" value="ECO:0000315"/>
    <property type="project" value="MGI"/>
</dbReference>
<dbReference type="GO" id="GO:0008045">
    <property type="term" value="P:motor neuron axon guidance"/>
    <property type="evidence" value="ECO:0000316"/>
    <property type="project" value="MGI"/>
</dbReference>
<dbReference type="GO" id="GO:0042552">
    <property type="term" value="P:myelination"/>
    <property type="evidence" value="ECO:0000315"/>
    <property type="project" value="MGI"/>
</dbReference>
<dbReference type="GO" id="GO:0045893">
    <property type="term" value="P:positive regulation of DNA-templated transcription"/>
    <property type="evidence" value="ECO:0000314"/>
    <property type="project" value="UniProtKB"/>
</dbReference>
<dbReference type="GO" id="GO:0031643">
    <property type="term" value="P:positive regulation of myelination"/>
    <property type="evidence" value="ECO:0000315"/>
    <property type="project" value="UniProtKB"/>
</dbReference>
<dbReference type="GO" id="GO:0014040">
    <property type="term" value="P:positive regulation of Schwann cell differentiation"/>
    <property type="evidence" value="ECO:0000315"/>
    <property type="project" value="UniProtKB"/>
</dbReference>
<dbReference type="GO" id="GO:0045944">
    <property type="term" value="P:positive regulation of transcription by RNA polymerase II"/>
    <property type="evidence" value="ECO:0000314"/>
    <property type="project" value="UniProtKB"/>
</dbReference>
<dbReference type="GO" id="GO:0006611">
    <property type="term" value="P:protein export from nucleus"/>
    <property type="evidence" value="ECO:0000314"/>
    <property type="project" value="UniProtKB"/>
</dbReference>
<dbReference type="GO" id="GO:0016925">
    <property type="term" value="P:protein sumoylation"/>
    <property type="evidence" value="ECO:0000314"/>
    <property type="project" value="ARUK-UCL"/>
</dbReference>
<dbReference type="GO" id="GO:0006355">
    <property type="term" value="P:regulation of DNA-templated transcription"/>
    <property type="evidence" value="ECO:0000315"/>
    <property type="project" value="MGI"/>
</dbReference>
<dbReference type="GO" id="GO:0030278">
    <property type="term" value="P:regulation of ossification"/>
    <property type="evidence" value="ECO:0000315"/>
    <property type="project" value="MGI"/>
</dbReference>
<dbReference type="GO" id="GO:0021569">
    <property type="term" value="P:rhombomere 3 development"/>
    <property type="evidence" value="ECO:0000316"/>
    <property type="project" value="MGI"/>
</dbReference>
<dbReference type="GO" id="GO:0021660">
    <property type="term" value="P:rhombomere 3 formation"/>
    <property type="evidence" value="ECO:0000315"/>
    <property type="project" value="MGI"/>
</dbReference>
<dbReference type="GO" id="GO:0021659">
    <property type="term" value="P:rhombomere 3 structural organization"/>
    <property type="evidence" value="ECO:0000314"/>
    <property type="project" value="UniProtKB"/>
</dbReference>
<dbReference type="GO" id="GO:0021666">
    <property type="term" value="P:rhombomere 5 formation"/>
    <property type="evidence" value="ECO:0000315"/>
    <property type="project" value="MGI"/>
</dbReference>
<dbReference type="GO" id="GO:0021665">
    <property type="term" value="P:rhombomere 5 structural organization"/>
    <property type="evidence" value="ECO:0000314"/>
    <property type="project" value="UniProtKB"/>
</dbReference>
<dbReference type="GO" id="GO:0007622">
    <property type="term" value="P:rhythmic behavior"/>
    <property type="evidence" value="ECO:0000314"/>
    <property type="project" value="MGI"/>
</dbReference>
<dbReference type="GO" id="GO:0014037">
    <property type="term" value="P:Schwann cell differentiation"/>
    <property type="evidence" value="ECO:0000315"/>
    <property type="project" value="UniProtKB"/>
</dbReference>
<dbReference type="GO" id="GO:0035914">
    <property type="term" value="P:skeletal muscle cell differentiation"/>
    <property type="evidence" value="ECO:0000315"/>
    <property type="project" value="UniProtKB"/>
</dbReference>
<dbReference type="FunFam" id="3.30.160.60:FF:000837">
    <property type="entry name" value="E3 SUMO-protein ligase EGR2 isoform X1"/>
    <property type="match status" value="1"/>
</dbReference>
<dbReference type="FunFam" id="3.30.160.60:FF:000324">
    <property type="entry name" value="Early growth response protein 4"/>
    <property type="match status" value="1"/>
</dbReference>
<dbReference type="FunFam" id="3.30.160.60:FF:000419">
    <property type="entry name" value="Early growth response protein 4"/>
    <property type="match status" value="1"/>
</dbReference>
<dbReference type="Gene3D" id="3.30.160.60">
    <property type="entry name" value="Classic Zinc Finger"/>
    <property type="match status" value="3"/>
</dbReference>
<dbReference type="InterPro" id="IPR021849">
    <property type="entry name" value="EGR_N"/>
</dbReference>
<dbReference type="InterPro" id="IPR036236">
    <property type="entry name" value="Znf_C2H2_sf"/>
</dbReference>
<dbReference type="InterPro" id="IPR013087">
    <property type="entry name" value="Znf_C2H2_type"/>
</dbReference>
<dbReference type="PANTHER" id="PTHR23235:SF54">
    <property type="entry name" value="E3 SUMO-PROTEIN LIGASE EGR2"/>
    <property type="match status" value="1"/>
</dbReference>
<dbReference type="PANTHER" id="PTHR23235">
    <property type="entry name" value="KRUEPPEL-LIKE TRANSCRIPTION FACTOR"/>
    <property type="match status" value="1"/>
</dbReference>
<dbReference type="Pfam" id="PF11928">
    <property type="entry name" value="DUF3446"/>
    <property type="match status" value="1"/>
</dbReference>
<dbReference type="Pfam" id="PF00096">
    <property type="entry name" value="zf-C2H2"/>
    <property type="match status" value="3"/>
</dbReference>
<dbReference type="SMART" id="SM00355">
    <property type="entry name" value="ZnF_C2H2"/>
    <property type="match status" value="3"/>
</dbReference>
<dbReference type="SUPFAM" id="SSF57667">
    <property type="entry name" value="beta-beta-alpha zinc fingers"/>
    <property type="match status" value="2"/>
</dbReference>
<dbReference type="PROSITE" id="PS00028">
    <property type="entry name" value="ZINC_FINGER_C2H2_1"/>
    <property type="match status" value="3"/>
</dbReference>
<dbReference type="PROSITE" id="PS50157">
    <property type="entry name" value="ZINC_FINGER_C2H2_2"/>
    <property type="match status" value="3"/>
</dbReference>
<keyword id="KW-0007">Acetylation</keyword>
<keyword id="KW-0010">Activator</keyword>
<keyword id="KW-0025">Alternative splicing</keyword>
<keyword id="KW-0238">DNA-binding</keyword>
<keyword id="KW-0479">Metal-binding</keyword>
<keyword id="KW-0539">Nucleus</keyword>
<keyword id="KW-1185">Reference proteome</keyword>
<keyword id="KW-0677">Repeat</keyword>
<keyword id="KW-0804">Transcription</keyword>
<keyword id="KW-0805">Transcription regulation</keyword>
<keyword id="KW-0808">Transferase</keyword>
<keyword id="KW-0832">Ubl conjugation</keyword>
<keyword id="KW-0833">Ubl conjugation pathway</keyword>
<keyword id="KW-0862">Zinc</keyword>
<keyword id="KW-0863">Zinc-finger</keyword>
<sequence>MMTAKAVDKIPVTLSGFMHQLPDSLYPVEDLAASSVTIFPNGELGGPFDQMNGVAGDGMINIDMTGEKRPLDLPYPSSFAPISAPRNQTFTYMGKFSIDPQYPGASCYPEGIINIVSAGILQGVTPPASTTASSSVTSASPNPLATGPLGVCTMSQTQPELDHLYSPPPPPPPYSGCTGDLYQDPSAFLSPPSTTSTSSLAYQPPPSYPSPKPAMDPGLIPMIPDYPGFFPSPCQRDPHGAAGPDRKPFPCPLDSLRVPPPLTPLSTIRNFTLGGPGAGVTGPGASGGGEGPRLPGSGSAAVTATPYNPHHLPLRPILRPRKYPNRPSKTPVHERPYPCPAEGCDRRFSRSDELTRHIRIHTGHKPFQCRICMRNFSRSDHLTTHIRTHTGEKPFACDYCGRKFARSDERKRHTKIHLRQKERKSSAPSAPPSAQSSASGPGGSQAGGSLCGNSAIGGPLASCTSRTRTP</sequence>
<gene>
    <name type="primary">Egr2</name>
    <name type="synonym">Egr-2</name>
    <name type="synonym">Krox-20</name>
    <name type="synonym">Zfp-25</name>
</gene>
<name>EGR2_MOUSE</name>
<feature type="chain" id="PRO_0000047120" description="E3 SUMO-protein ligase EGR2">
    <location>
        <begin position="1"/>
        <end position="470"/>
    </location>
</feature>
<feature type="zinc finger region" description="C2H2-type 1" evidence="2">
    <location>
        <begin position="337"/>
        <end position="361"/>
    </location>
</feature>
<feature type="zinc finger region" description="C2H2-type 2" evidence="2">
    <location>
        <begin position="367"/>
        <end position="389"/>
    </location>
</feature>
<feature type="zinc finger region" description="C2H2-type 3" evidence="2">
    <location>
        <begin position="395"/>
        <end position="417"/>
    </location>
</feature>
<feature type="region of interest" description="Disordered" evidence="3">
    <location>
        <begin position="126"/>
        <end position="153"/>
    </location>
</feature>
<feature type="region of interest" description="Disordered" evidence="3">
    <location>
        <begin position="159"/>
        <end position="178"/>
    </location>
</feature>
<feature type="region of interest" description="Disordered" evidence="3">
    <location>
        <begin position="185"/>
        <end position="210"/>
    </location>
</feature>
<feature type="region of interest" description="Disordered" evidence="3">
    <location>
        <begin position="275"/>
        <end position="345"/>
    </location>
</feature>
<feature type="region of interest" description="Disordered" evidence="3">
    <location>
        <begin position="408"/>
        <end position="470"/>
    </location>
</feature>
<feature type="compositionally biased region" description="Low complexity" evidence="3">
    <location>
        <begin position="126"/>
        <end position="141"/>
    </location>
</feature>
<feature type="compositionally biased region" description="Low complexity" evidence="3">
    <location>
        <begin position="190"/>
        <end position="202"/>
    </location>
</feature>
<feature type="compositionally biased region" description="Gly residues" evidence="3">
    <location>
        <begin position="275"/>
        <end position="291"/>
    </location>
</feature>
<feature type="compositionally biased region" description="Basic residues" evidence="3">
    <location>
        <begin position="412"/>
        <end position="422"/>
    </location>
</feature>
<feature type="compositionally biased region" description="Low complexity" evidence="3">
    <location>
        <begin position="426"/>
        <end position="439"/>
    </location>
</feature>
<feature type="compositionally biased region" description="Gly residues" evidence="3">
    <location>
        <begin position="440"/>
        <end position="450"/>
    </location>
</feature>
<feature type="modified residue" description="N6-acetyllysine; by EP300" evidence="12">
    <location>
        <position position="247"/>
    </location>
</feature>
<feature type="splice variant" id="VSP_006864" description="In isoform Short." evidence="17">
    <location>
        <begin position="1"/>
        <end position="50"/>
    </location>
</feature>
<feature type="mutagenesis site" description="Abolishes interaction with WWP2; if associated with F-208." evidence="10">
    <original>Y</original>
    <variation>F</variation>
    <location>
        <position position="174"/>
    </location>
</feature>
<feature type="mutagenesis site" description="Abolishes interaction with WWP2; if associated with F-174." evidence="10">
    <original>Y</original>
    <variation>F</variation>
    <location>
        <position position="208"/>
    </location>
</feature>
<feature type="mutagenesis site" description="Abolishes acetylation." evidence="12">
    <original>K</original>
    <variation>R</variation>
    <location>
        <position position="247"/>
    </location>
</feature>
<feature type="mutagenesis site" description="Inhibits interaction with SFN." evidence="9">
    <original>S</original>
    <variation>A</variation>
    <location>
        <position position="377"/>
    </location>
</feature>
<feature type="mutagenesis site" description="Reduces transcriptional regulatory activity." evidence="14">
    <original>D</original>
    <variation>G</variation>
    <location>
        <position position="408"/>
    </location>
</feature>